<feature type="chain" id="PRO_0000159179" description="Ferredoxin B">
    <location>
        <begin position="1"/>
        <end position="53" status="greater than"/>
    </location>
</feature>
<feature type="domain" description="4Fe-4S ferredoxin-type 1" evidence="1">
    <location>
        <begin position="34"/>
        <end position="53" status="greater than"/>
    </location>
</feature>
<feature type="region of interest" description="N-terminal extension">
    <location>
        <begin position="1"/>
        <end position="35"/>
    </location>
</feature>
<feature type="binding site" evidence="1">
    <location>
        <position position="44"/>
    </location>
    <ligand>
        <name>[3Fe-4S] cluster</name>
        <dbReference type="ChEBI" id="CHEBI:21137"/>
    </ligand>
</feature>
<feature type="binding site" evidence="1">
    <location>
        <position position="50"/>
    </location>
    <ligand>
        <name>[3Fe-4S] cluster</name>
        <dbReference type="ChEBI" id="CHEBI:21137"/>
    </ligand>
</feature>
<feature type="modified residue" description="N6-methyllysine" evidence="2">
    <location>
        <position position="29"/>
    </location>
</feature>
<feature type="non-terminal residue">
    <location>
        <position position="53"/>
    </location>
</feature>
<organism>
    <name type="scientific">Sulfuracidifex metallicus</name>
    <name type="common">Sulfolobus metallicus</name>
    <dbReference type="NCBI Taxonomy" id="47303"/>
    <lineage>
        <taxon>Archaea</taxon>
        <taxon>Thermoproteota</taxon>
        <taxon>Thermoprotei</taxon>
        <taxon>Sulfolobales</taxon>
        <taxon>Sulfolobaceae</taxon>
        <taxon>Sulfuracidifex</taxon>
    </lineage>
</organism>
<dbReference type="SMR" id="P81539"/>
<dbReference type="GO" id="GO:0051538">
    <property type="term" value="F:3 iron, 4 sulfur cluster binding"/>
    <property type="evidence" value="ECO:0007669"/>
    <property type="project" value="UniProtKB-KW"/>
</dbReference>
<dbReference type="GO" id="GO:0051539">
    <property type="term" value="F:4 iron, 4 sulfur cluster binding"/>
    <property type="evidence" value="ECO:0007669"/>
    <property type="project" value="UniProtKB-KW"/>
</dbReference>
<dbReference type="GO" id="GO:0046872">
    <property type="term" value="F:metal ion binding"/>
    <property type="evidence" value="ECO:0007669"/>
    <property type="project" value="UniProtKB-KW"/>
</dbReference>
<dbReference type="Gene3D" id="3.30.70.20">
    <property type="match status" value="1"/>
</dbReference>
<protein>
    <recommendedName>
        <fullName>Ferredoxin B</fullName>
        <shortName>FDB</shortName>
    </recommendedName>
    <alternativeName>
        <fullName>Seven-iron ferredoxin</fullName>
    </alternativeName>
</protein>
<proteinExistence type="evidence at protein level"/>
<accession>P81539</accession>
<comment type="function">
    <text>Ferredoxins are iron-sulfur proteins that transfer electrons in a wide variety of metabolic reactions.</text>
</comment>
<comment type="cofactor">
    <cofactor>
        <name>[3Fe-4S] cluster</name>
        <dbReference type="ChEBI" id="CHEBI:21137"/>
    </cofactor>
    <text>Binds 1 [3Fe-4S] cluster.</text>
</comment>
<comment type="cofactor">
    <cofactor>
        <name>[4Fe-4S] cluster</name>
        <dbReference type="ChEBI" id="CHEBI:49883"/>
    </cofactor>
    <text>Binds 1 [4Fe-4S] cluster.</text>
</comment>
<keyword id="KW-0003">3Fe-4S</keyword>
<keyword id="KW-0004">4Fe-4S</keyword>
<keyword id="KW-0903">Direct protein sequencing</keyword>
<keyword id="KW-0249">Electron transport</keyword>
<keyword id="KW-0408">Iron</keyword>
<keyword id="KW-0411">Iron-sulfur</keyword>
<keyword id="KW-0479">Metal-binding</keyword>
<keyword id="KW-0488">Methylation</keyword>
<keyword id="KW-0677">Repeat</keyword>
<keyword id="KW-0813">Transport</keyword>
<evidence type="ECO:0000250" key="1"/>
<evidence type="ECO:0000269" key="2">
    <source ref="1"/>
</evidence>
<sequence length="53" mass="5714">GIDPNYRSLPVVKEEQGVKIYGTYEPPTKLGIWGTIVGVDFDLCIADGSCINA</sequence>
<reference key="1">
    <citation type="journal article" date="1998" name="J. Biol. Inorg. Chem.">
        <title>Di-cluster, seven iron ferredoxins from hyperthermophilic Sulfolobales.</title>
        <authorList>
            <person name="Gomes C.M."/>
            <person name="Faria A."/>
            <person name="Carita J."/>
            <person name="Mendes J.C."/>
            <person name="Regalla M."/>
            <person name="Chicau P."/>
            <person name="Huber H."/>
            <person name="Stetter K.O."/>
            <person name="Teixeira M."/>
        </authorList>
    </citation>
    <scope>PROTEIN SEQUENCE</scope>
    <scope>METHYLATION AT LYS-29</scope>
</reference>
<name>FERB_SULME</name>